<keyword id="KW-0150">Chloroplast</keyword>
<keyword id="KW-0472">Membrane</keyword>
<keyword id="KW-0602">Photosynthesis</keyword>
<keyword id="KW-0604">Photosystem II</keyword>
<keyword id="KW-0934">Plastid</keyword>
<keyword id="KW-0674">Reaction center</keyword>
<keyword id="KW-0691">RNA editing</keyword>
<keyword id="KW-0793">Thylakoid</keyword>
<keyword id="KW-0812">Transmembrane</keyword>
<keyword id="KW-1133">Transmembrane helix</keyword>
<evidence type="ECO:0000255" key="1">
    <source>
        <dbReference type="HAMAP-Rule" id="MF_01317"/>
    </source>
</evidence>
<evidence type="ECO:0000305" key="2">
    <source>
    </source>
</evidence>
<accession>Q7J1C4</accession>
<accession>Q3V520</accession>
<comment type="function">
    <text evidence="1">One of the components of the core complex of photosystem II (PSII). PSII is a light-driven water:plastoquinone oxidoreductase that uses light energy to abstract electrons from H(2)O, generating O(2) and a proton gradient subsequently used for ATP formation. It consists of a core antenna complex that captures photons, and an electron transfer chain that converts photonic excitation into a charge separation. This subunit is found at the monomer-monomer interface and is required for correct PSII assembly and/or dimerization.</text>
</comment>
<comment type="subunit">
    <text evidence="1">PSII is composed of 1 copy each of membrane proteins PsbA, PsbB, PsbC, PsbD, PsbE, PsbF, PsbH, PsbI, PsbJ, PsbK, PsbL, PsbM, PsbT, PsbX, PsbY, PsbZ, Psb30/Ycf12, at least 3 peripheral proteins of the oxygen-evolving complex and a large number of cofactors. It forms dimeric complexes.</text>
</comment>
<comment type="subcellular location">
    <subcellularLocation>
        <location evidence="1">Plastid</location>
        <location evidence="1">Chloroplast thylakoid membrane</location>
        <topology evidence="1">Single-pass membrane protein</topology>
    </subcellularLocation>
</comment>
<comment type="RNA editing">
    <location>
        <position position="1" evidence="2"/>
    </location>
    <text evidence="2">The initiator methionine is created by RNA editing.</text>
</comment>
<comment type="similarity">
    <text evidence="1">Belongs to the PsbL family.</text>
</comment>
<proteinExistence type="evidence at transcript level"/>
<gene>
    <name evidence="1" type="primary">psbL</name>
</gene>
<protein>
    <recommendedName>
        <fullName evidence="1">Photosystem II reaction center protein L</fullName>
        <shortName evidence="1">PSII-L</shortName>
    </recommendedName>
</protein>
<geneLocation type="chloroplast"/>
<reference key="1">
    <citation type="journal article" date="2000" name="Am. J. Bot.">
        <title>Utility of 17 chloroplast genes for inferring the phylogeny of the basal angiosperms.</title>
        <authorList>
            <person name="Graham S.W."/>
            <person name="Olmstead R.G."/>
        </authorList>
    </citation>
    <scope>NUCLEOTIDE SEQUENCE [GENOMIC DNA]</scope>
</reference>
<reference key="2">
    <citation type="journal article" date="2005" name="Mol. Biol. Evol.">
        <title>Analysis of Acorus calamus chloroplast genome and its phylogenetic implications.</title>
        <authorList>
            <person name="Goremykin V.V."/>
            <person name="Holland B."/>
            <person name="Hirsch-Ernst K.I."/>
            <person name="Hellwig F.H."/>
        </authorList>
    </citation>
    <scope>NUCLEOTIDE SEQUENCE [LARGE SCALE GENOMIC DNA]</scope>
    <scope>SUGGESTION OF RNA EDITING</scope>
</reference>
<organism>
    <name type="scientific">Acorus calamus</name>
    <name type="common">Sweet flag</name>
    <dbReference type="NCBI Taxonomy" id="4465"/>
    <lineage>
        <taxon>Eukaryota</taxon>
        <taxon>Viridiplantae</taxon>
        <taxon>Streptophyta</taxon>
        <taxon>Embryophyta</taxon>
        <taxon>Tracheophyta</taxon>
        <taxon>Spermatophyta</taxon>
        <taxon>Magnoliopsida</taxon>
        <taxon>Liliopsida</taxon>
        <taxon>Acoraceae</taxon>
        <taxon>Acorus</taxon>
    </lineage>
</organism>
<dbReference type="EMBL" id="AF123828">
    <property type="protein sequence ID" value="AAG26193.1"/>
    <property type="molecule type" value="Genomic_DNA"/>
</dbReference>
<dbReference type="EMBL" id="AJ879453">
    <property type="protein sequence ID" value="CAI53808.1"/>
    <property type="molecule type" value="Genomic_DNA"/>
</dbReference>
<dbReference type="RefSeq" id="YP_319779.1">
    <property type="nucleotide sequence ID" value="NC_007407.1"/>
</dbReference>
<dbReference type="SMR" id="Q7J1C4"/>
<dbReference type="GeneID" id="3677472"/>
<dbReference type="GO" id="GO:0009535">
    <property type="term" value="C:chloroplast thylakoid membrane"/>
    <property type="evidence" value="ECO:0007669"/>
    <property type="project" value="UniProtKB-SubCell"/>
</dbReference>
<dbReference type="GO" id="GO:0009539">
    <property type="term" value="C:photosystem II reaction center"/>
    <property type="evidence" value="ECO:0007669"/>
    <property type="project" value="InterPro"/>
</dbReference>
<dbReference type="GO" id="GO:0015979">
    <property type="term" value="P:photosynthesis"/>
    <property type="evidence" value="ECO:0007669"/>
    <property type="project" value="UniProtKB-UniRule"/>
</dbReference>
<dbReference type="HAMAP" id="MF_01317">
    <property type="entry name" value="PSII_PsbL"/>
    <property type="match status" value="1"/>
</dbReference>
<dbReference type="InterPro" id="IPR003372">
    <property type="entry name" value="PSII_PsbL"/>
</dbReference>
<dbReference type="InterPro" id="IPR037266">
    <property type="entry name" value="PSII_PsbL_sf"/>
</dbReference>
<dbReference type="NCBIfam" id="NF001972">
    <property type="entry name" value="PRK00753.1"/>
    <property type="match status" value="1"/>
</dbReference>
<dbReference type="Pfam" id="PF02419">
    <property type="entry name" value="PsbL"/>
    <property type="match status" value="1"/>
</dbReference>
<dbReference type="SUPFAM" id="SSF161017">
    <property type="entry name" value="Photosystem II reaction center protein L, PsbL"/>
    <property type="match status" value="1"/>
</dbReference>
<feature type="chain" id="PRO_0000219671" description="Photosystem II reaction center protein L">
    <location>
        <begin position="1"/>
        <end position="38"/>
    </location>
</feature>
<feature type="transmembrane region" description="Helical" evidence="1">
    <location>
        <begin position="17"/>
        <end position="37"/>
    </location>
</feature>
<sequence>MTQSNPNEQNVELNRTSLYWGLLLIFVLAVLFSNYFFN</sequence>
<name>PSBL_ACOCL</name>